<organism>
    <name type="scientific">Mus musculus</name>
    <name type="common">Mouse</name>
    <dbReference type="NCBI Taxonomy" id="10090"/>
    <lineage>
        <taxon>Eukaryota</taxon>
        <taxon>Metazoa</taxon>
        <taxon>Chordata</taxon>
        <taxon>Craniata</taxon>
        <taxon>Vertebrata</taxon>
        <taxon>Euteleostomi</taxon>
        <taxon>Mammalia</taxon>
        <taxon>Eutheria</taxon>
        <taxon>Euarchontoglires</taxon>
        <taxon>Glires</taxon>
        <taxon>Rodentia</taxon>
        <taxon>Myomorpha</taxon>
        <taxon>Muroidea</taxon>
        <taxon>Muridae</taxon>
        <taxon>Murinae</taxon>
        <taxon>Mus</taxon>
        <taxon>Mus</taxon>
    </lineage>
</organism>
<reference key="1">
    <citation type="journal article" date="2009" name="PLoS Biol.">
        <title>Lineage-specific biology revealed by a finished genome assembly of the mouse.</title>
        <authorList>
            <person name="Church D.M."/>
            <person name="Goodstadt L."/>
            <person name="Hillier L.W."/>
            <person name="Zody M.C."/>
            <person name="Goldstein S."/>
            <person name="She X."/>
            <person name="Bult C.J."/>
            <person name="Agarwala R."/>
            <person name="Cherry J.L."/>
            <person name="DiCuccio M."/>
            <person name="Hlavina W."/>
            <person name="Kapustin Y."/>
            <person name="Meric P."/>
            <person name="Maglott D."/>
            <person name="Birtle Z."/>
            <person name="Marques A.C."/>
            <person name="Graves T."/>
            <person name="Zhou S."/>
            <person name="Teague B."/>
            <person name="Potamousis K."/>
            <person name="Churas C."/>
            <person name="Place M."/>
            <person name="Herschleb J."/>
            <person name="Runnheim R."/>
            <person name="Forrest D."/>
            <person name="Amos-Landgraf J."/>
            <person name="Schwartz D.C."/>
            <person name="Cheng Z."/>
            <person name="Lindblad-Toh K."/>
            <person name="Eichler E.E."/>
            <person name="Ponting C.P."/>
        </authorList>
    </citation>
    <scope>NUCLEOTIDE SEQUENCE [LARGE SCALE GENOMIC DNA]</scope>
    <source>
        <strain>C57BL/6J</strain>
    </source>
</reference>
<reference key="2">
    <citation type="journal article" date="2004" name="Genome Res.">
        <title>The status, quality, and expansion of the NIH full-length cDNA project: the Mammalian Gene Collection (MGC).</title>
        <authorList>
            <consortium name="The MGC Project Team"/>
        </authorList>
    </citation>
    <scope>NUCLEOTIDE SEQUENCE [LARGE SCALE MRNA]</scope>
</reference>
<reference key="3">
    <citation type="journal article" date="2010" name="Cell">
        <title>A tissue-specific atlas of mouse protein phosphorylation and expression.</title>
        <authorList>
            <person name="Huttlin E.L."/>
            <person name="Jedrychowski M.P."/>
            <person name="Elias J.E."/>
            <person name="Goswami T."/>
            <person name="Rad R."/>
            <person name="Beausoleil S.A."/>
            <person name="Villen J."/>
            <person name="Haas W."/>
            <person name="Sowa M.E."/>
            <person name="Gygi S.P."/>
        </authorList>
    </citation>
    <scope>PHOSPHORYLATION [LARGE SCALE ANALYSIS] AT THR-345 AND SER-351</scope>
    <scope>IDENTIFICATION BY MASS SPECTROMETRY [LARGE SCALE ANALYSIS]</scope>
    <source>
        <tissue>Kidney</tissue>
    </source>
</reference>
<feature type="chain" id="PRO_0000358907" description="RIPOR family member 3">
    <location>
        <begin position="1"/>
        <end position="938"/>
    </location>
</feature>
<feature type="region of interest" description="Disordered" evidence="2">
    <location>
        <begin position="402"/>
        <end position="430"/>
    </location>
</feature>
<feature type="region of interest" description="Disordered" evidence="2">
    <location>
        <begin position="579"/>
        <end position="603"/>
    </location>
</feature>
<feature type="modified residue" description="Phosphoserine" evidence="1">
    <location>
        <position position="9"/>
    </location>
</feature>
<feature type="modified residue" description="Phosphoserine" evidence="1">
    <location>
        <position position="24"/>
    </location>
</feature>
<feature type="modified residue" description="Phosphoserine" evidence="1">
    <location>
        <position position="340"/>
    </location>
</feature>
<feature type="modified residue" description="Phosphothreonine" evidence="4">
    <location>
        <position position="345"/>
    </location>
</feature>
<feature type="modified residue" description="Phosphoserine" evidence="4">
    <location>
        <position position="351"/>
    </location>
</feature>
<feature type="modified residue" description="Phosphoserine" evidence="1">
    <location>
        <position position="384"/>
    </location>
</feature>
<name>RIPR3_MOUSE</name>
<proteinExistence type="evidence at protein level"/>
<dbReference type="EMBL" id="AL831766">
    <property type="status" value="NOT_ANNOTATED_CDS"/>
    <property type="molecule type" value="Genomic_DNA"/>
</dbReference>
<dbReference type="EMBL" id="AL928998">
    <property type="status" value="NOT_ANNOTATED_CDS"/>
    <property type="molecule type" value="Genomic_DNA"/>
</dbReference>
<dbReference type="EMBL" id="BC130272">
    <property type="protein sequence ID" value="AAI30273.1"/>
    <property type="molecule type" value="mRNA"/>
</dbReference>
<dbReference type="CCDS" id="CCDS38341.1"/>
<dbReference type="RefSeq" id="NP_001074177.1">
    <property type="nucleotide sequence ID" value="NM_001080708.3"/>
</dbReference>
<dbReference type="RefSeq" id="XP_006500200.1">
    <property type="nucleotide sequence ID" value="XM_006500137.1"/>
</dbReference>
<dbReference type="RefSeq" id="XP_006500201.1">
    <property type="nucleotide sequence ID" value="XM_006500138.1"/>
</dbReference>
<dbReference type="RefSeq" id="XP_006500202.1">
    <property type="nucleotide sequence ID" value="XM_006500139.3"/>
</dbReference>
<dbReference type="FunCoup" id="A1L3T7">
    <property type="interactions" value="20"/>
</dbReference>
<dbReference type="STRING" id="10090.ENSMUSP00000096672"/>
<dbReference type="GlyGen" id="A1L3T7">
    <property type="glycosylation" value="1 site"/>
</dbReference>
<dbReference type="iPTMnet" id="A1L3T7"/>
<dbReference type="PhosphoSitePlus" id="A1L3T7"/>
<dbReference type="jPOST" id="A1L3T7"/>
<dbReference type="PaxDb" id="10090-ENSMUSP00000096672"/>
<dbReference type="ProteomicsDB" id="253294"/>
<dbReference type="Antibodypedia" id="66212">
    <property type="antibodies" value="61 antibodies from 13 providers"/>
</dbReference>
<dbReference type="Ensembl" id="ENSMUST00000099073.3">
    <property type="protein sequence ID" value="ENSMUSP00000096672.3"/>
    <property type="gene ID" value="ENSMUSG00000074577.10"/>
</dbReference>
<dbReference type="GeneID" id="69553"/>
<dbReference type="KEGG" id="mmu:69553"/>
<dbReference type="UCSC" id="uc008oal.1">
    <property type="organism name" value="mouse"/>
</dbReference>
<dbReference type="AGR" id="MGI:1916803"/>
<dbReference type="CTD" id="140876"/>
<dbReference type="MGI" id="MGI:1916803">
    <property type="gene designation" value="Ripor3"/>
</dbReference>
<dbReference type="VEuPathDB" id="HostDB:ENSMUSG00000074577"/>
<dbReference type="eggNOG" id="ENOG502QY15">
    <property type="taxonomic scope" value="Eukaryota"/>
</dbReference>
<dbReference type="GeneTree" id="ENSGT00940000153717"/>
<dbReference type="HOGENOM" id="CLU_006211_1_0_1"/>
<dbReference type="InParanoid" id="A1L3T7"/>
<dbReference type="OMA" id="ELDYLCG"/>
<dbReference type="OrthoDB" id="9999654at2759"/>
<dbReference type="PhylomeDB" id="A1L3T7"/>
<dbReference type="TreeFam" id="TF329332"/>
<dbReference type="BioGRID-ORCS" id="69553">
    <property type="hits" value="3 hits in 77 CRISPR screens"/>
</dbReference>
<dbReference type="ChiTaRS" id="Ripor3">
    <property type="organism name" value="mouse"/>
</dbReference>
<dbReference type="PRO" id="PR:A1L3T7"/>
<dbReference type="Proteomes" id="UP000000589">
    <property type="component" value="Chromosome 2"/>
</dbReference>
<dbReference type="RNAct" id="A1L3T7">
    <property type="molecule type" value="protein"/>
</dbReference>
<dbReference type="Bgee" id="ENSMUSG00000074577">
    <property type="expression patterns" value="Expressed in esophagus and 62 other cell types or tissues"/>
</dbReference>
<dbReference type="Gene3D" id="1.25.10.10">
    <property type="entry name" value="Leucine-rich Repeat Variant"/>
    <property type="match status" value="1"/>
</dbReference>
<dbReference type="InterPro" id="IPR011989">
    <property type="entry name" value="ARM-like"/>
</dbReference>
<dbReference type="InterPro" id="IPR016024">
    <property type="entry name" value="ARM-type_fold"/>
</dbReference>
<dbReference type="InterPro" id="IPR031780">
    <property type="entry name" value="FAM65_N"/>
</dbReference>
<dbReference type="InterPro" id="IPR026136">
    <property type="entry name" value="RIPOR3"/>
</dbReference>
<dbReference type="PANTHER" id="PTHR15829">
    <property type="entry name" value="PROTEIN KINASE PKN/PRK1, EFFECTOR"/>
    <property type="match status" value="1"/>
</dbReference>
<dbReference type="PANTHER" id="PTHR15829:SF15">
    <property type="entry name" value="RIPOR FAMILY MEMBER 3"/>
    <property type="match status" value="1"/>
</dbReference>
<dbReference type="Pfam" id="PF15903">
    <property type="entry name" value="PL48"/>
    <property type="match status" value="1"/>
</dbReference>
<dbReference type="SUPFAM" id="SSF48371">
    <property type="entry name" value="ARM repeat"/>
    <property type="match status" value="1"/>
</dbReference>
<accession>A1L3T7</accession>
<protein>
    <recommendedName>
        <fullName evidence="1">RIPOR family member 3</fullName>
    </recommendedName>
</protein>
<evidence type="ECO:0000250" key="1">
    <source>
        <dbReference type="UniProtKB" id="Q96MK2"/>
    </source>
</evidence>
<evidence type="ECO:0000256" key="2">
    <source>
        <dbReference type="SAM" id="MobiDB-lite"/>
    </source>
</evidence>
<evidence type="ECO:0000305" key="3"/>
<evidence type="ECO:0007744" key="4">
    <source>
    </source>
</evidence>
<sequence length="938" mass="104161">MSVRLRFLSQGDAGAVGTVGRSASFAGFSSAQSRRLSKSINRNSVRSRLPAKSSKAYRTLRKGSLCLDPRPQQVKKIFDALKRGLREHLCEQQAELDYLCGRHTDTQRGSRLAFYYDLDKQLRLVERHIRKVEFHISKVDELYEAYCIQWRLRDGASNMQRAFSNSTQSRASRESLQELGRSLQECLEDMCLIEGTLEGHLGEFQVKMKGLVGYARLCPGDQYEVLMRLGRQRWRLKGRIEPDDSQTWDEEERVFVPTVHENLEIKVTELRGLSSMVVGAVTCDVADFFMARPQLVVVDITELGTIKLQLELLWNPLDSECRLVSPSPTGRFSMGSRKGSLYTWTPPSTPSFRDKYYLSLLQQPVQQSLLLGGPKATSILGYLSDSELQGPRLRSRSQELLEMDSFSSEDPRDTETSTSASTSDVGFLPVPVGSAACTEEETREGPPPLGLLPGLAHPARGVLVERPGWRDLGGERLALLQDAPIHSPMVPRSRKGQEDGDVGDGVEGPVQEVLDLLRSADPAQPQLRELEYQVLGLRERLKPRGVQPEPVSAQSLMDCILESFAFLNADLASDELSLFGGSQAPERDSPPPPRPSLKVSPSELTAGAPELDTLLTVHLQVCKALLQKLASPNLSRMVEDCLLEEAVQQRQVLEVLSDLDLEQVSKARSVEEIIPQASHRKGGLALWQGCTQPGGVLACPASTLLSQLKKTFLHRVRGKYPGQLEIVCRRLLEQVVGCGGLLVPAGLQEEQVVTWFQFHSYLQRQSISDLEKHLAQLTKEVTLIEELSCAGPAKALRKLHGKCLSQLQPLPQTLQAWALLQLDGPPRLCRAARTRLASAARNKRFREKALLYYTNALNDSDAKVQQAACVALQQLGGIESCEQIVSLCQSDLEAVRVAAREATLSFGEKGRLAFEKMDKLHSEQEAFCQEADVEITIF</sequence>
<gene>
    <name evidence="1" type="primary">Ripor3</name>
    <name evidence="1" type="synonym">Fam65c</name>
</gene>
<comment type="similarity">
    <text evidence="3">Belongs to the RIPOR family.</text>
</comment>
<keyword id="KW-0597">Phosphoprotein</keyword>
<keyword id="KW-1185">Reference proteome</keyword>